<feature type="chain" id="PRO_0000075791" description="LIM/homeobox protein Lhx5">
    <location>
        <begin position="1"/>
        <end position="402"/>
    </location>
</feature>
<feature type="domain" description="LIM zinc-binding 1" evidence="2">
    <location>
        <begin position="3"/>
        <end position="61"/>
    </location>
</feature>
<feature type="domain" description="LIM zinc-binding 2" evidence="2">
    <location>
        <begin position="62"/>
        <end position="125"/>
    </location>
</feature>
<feature type="DNA-binding region" description="Homeobox" evidence="1">
    <location>
        <begin position="180"/>
        <end position="239"/>
    </location>
</feature>
<feature type="region of interest" description="Disordered" evidence="3">
    <location>
        <begin position="124"/>
        <end position="186"/>
    </location>
</feature>
<feature type="region of interest" description="Disordered" evidence="3">
    <location>
        <begin position="298"/>
        <end position="402"/>
    </location>
</feature>
<feature type="compositionally biased region" description="Low complexity" evidence="3">
    <location>
        <begin position="124"/>
        <end position="148"/>
    </location>
</feature>
<feature type="compositionally biased region" description="Basic and acidic residues" evidence="3">
    <location>
        <begin position="151"/>
        <end position="167"/>
    </location>
</feature>
<feature type="compositionally biased region" description="Low complexity" evidence="3">
    <location>
        <begin position="300"/>
        <end position="311"/>
    </location>
</feature>
<feature type="compositionally biased region" description="Low complexity" evidence="3">
    <location>
        <begin position="322"/>
        <end position="336"/>
    </location>
</feature>
<sequence>MMVHCAGCERPILDRFLLNVLDRAWHIKCVQCCECKTNLSEKCFSREGKLYCKNDFFRRFGTKCAGCAQGISPSDLVRKARSKVFHLNCFTCMVCNKQLSTGEELYVIDENKFVCKDDYLSSSSLKEGSLNSVSSCTDRSLSPDLQDPLQDDPKETDNSTSSDKETANNENEEQNSGTKRRGPRTTIKAKQLETLKAAFAATPKPTRHIREQLAQETGLNMRVIQVWFQNRRSKERRMKQLSALGARRHAFFRSPRRMRPLGGRLDESEMLGSTPYTYYGDYQSDYYAPGGNYDFFAHGPPSQAQSPADSSFLAASGPGSTPLGALEPPLAGPHGADNPRFTDMISHPDTPSPEPGLPGALHPMPGEVFSGGPSPPFPMSGTSGYSGPLSHPNPELNEAAVW</sequence>
<proteinExistence type="evidence at transcript level"/>
<evidence type="ECO:0000255" key="1">
    <source>
        <dbReference type="PROSITE-ProRule" id="PRU00108"/>
    </source>
</evidence>
<evidence type="ECO:0000255" key="2">
    <source>
        <dbReference type="PROSITE-ProRule" id="PRU00125"/>
    </source>
</evidence>
<evidence type="ECO:0000256" key="3">
    <source>
        <dbReference type="SAM" id="MobiDB-lite"/>
    </source>
</evidence>
<evidence type="ECO:0000305" key="4"/>
<accession>P61376</accession>
<accession>P50459</accession>
<comment type="function">
    <text>Plays an essential role in the regulation of neuronal differentiation and migration during development of the central nervous system.</text>
</comment>
<comment type="subcellular location">
    <subcellularLocation>
        <location evidence="4">Nucleus</location>
    </subcellularLocation>
</comment>
<protein>
    <recommendedName>
        <fullName>LIM/homeobox protein Lhx5</fullName>
        <shortName>LIM homeobox protein 5</shortName>
    </recommendedName>
    <alternativeName>
        <fullName>Homeobox protein LIM-2</fullName>
    </alternativeName>
</protein>
<gene>
    <name type="primary">Lhx5</name>
    <name type="synonym">Lim-2</name>
    <name type="synonym">Lim2</name>
</gene>
<dbReference type="EMBL" id="L35572">
    <property type="protein sequence ID" value="AAA62162.1"/>
    <property type="molecule type" value="mRNA"/>
</dbReference>
<dbReference type="PIR" id="I61573">
    <property type="entry name" value="I61573"/>
</dbReference>
<dbReference type="RefSeq" id="NP_620605.1">
    <property type="nucleotide sequence ID" value="NM_139036.2"/>
</dbReference>
<dbReference type="SMR" id="P61376"/>
<dbReference type="FunCoup" id="P61376">
    <property type="interactions" value="20"/>
</dbReference>
<dbReference type="STRING" id="10116.ENSRNOP00000001883"/>
<dbReference type="PhosphoSitePlus" id="P61376"/>
<dbReference type="PaxDb" id="10116-ENSRNOP00000001883"/>
<dbReference type="Ensembl" id="ENSRNOT00000001883.4">
    <property type="protein sequence ID" value="ENSRNOP00000001883.2"/>
    <property type="gene ID" value="ENSRNOG00000001392.4"/>
</dbReference>
<dbReference type="GeneID" id="124451"/>
<dbReference type="KEGG" id="rno:124451"/>
<dbReference type="UCSC" id="RGD:71079">
    <property type="organism name" value="rat"/>
</dbReference>
<dbReference type="AGR" id="RGD:71079"/>
<dbReference type="CTD" id="64211"/>
<dbReference type="RGD" id="71079">
    <property type="gene designation" value="Lhx5"/>
</dbReference>
<dbReference type="eggNOG" id="KOG0490">
    <property type="taxonomic scope" value="Eukaryota"/>
</dbReference>
<dbReference type="GeneTree" id="ENSGT00940000161536"/>
<dbReference type="HOGENOM" id="CLU_027802_3_1_1"/>
<dbReference type="InParanoid" id="P61376"/>
<dbReference type="OMA" id="PSDDQRY"/>
<dbReference type="OrthoDB" id="10068367at2759"/>
<dbReference type="PhylomeDB" id="P61376"/>
<dbReference type="TreeFam" id="TF315442"/>
<dbReference type="PRO" id="PR:P61376"/>
<dbReference type="Proteomes" id="UP000002494">
    <property type="component" value="Chromosome 12"/>
</dbReference>
<dbReference type="Bgee" id="ENSRNOG00000001392">
    <property type="expression patterns" value="Expressed in cerebellum and 2 other cell types or tissues"/>
</dbReference>
<dbReference type="GO" id="GO:0005634">
    <property type="term" value="C:nucleus"/>
    <property type="evidence" value="ECO:0000318"/>
    <property type="project" value="GO_Central"/>
</dbReference>
<dbReference type="GO" id="GO:0000981">
    <property type="term" value="F:DNA-binding transcription factor activity, RNA polymerase II-specific"/>
    <property type="evidence" value="ECO:0000318"/>
    <property type="project" value="GO_Central"/>
</dbReference>
<dbReference type="GO" id="GO:0000977">
    <property type="term" value="F:RNA polymerase II transcription regulatory region sequence-specific DNA binding"/>
    <property type="evidence" value="ECO:0000318"/>
    <property type="project" value="GO_Central"/>
</dbReference>
<dbReference type="GO" id="GO:1990837">
    <property type="term" value="F:sequence-specific double-stranded DNA binding"/>
    <property type="evidence" value="ECO:0000266"/>
    <property type="project" value="RGD"/>
</dbReference>
<dbReference type="GO" id="GO:0008270">
    <property type="term" value="F:zinc ion binding"/>
    <property type="evidence" value="ECO:0007669"/>
    <property type="project" value="InterPro"/>
</dbReference>
<dbReference type="GO" id="GO:0021846">
    <property type="term" value="P:cell proliferation in forebrain"/>
    <property type="evidence" value="ECO:0000266"/>
    <property type="project" value="RGD"/>
</dbReference>
<dbReference type="GO" id="GO:0007267">
    <property type="term" value="P:cell-cell signaling"/>
    <property type="evidence" value="ECO:0000266"/>
    <property type="project" value="RGD"/>
</dbReference>
<dbReference type="GO" id="GO:0021702">
    <property type="term" value="P:cerebellar Purkinje cell differentiation"/>
    <property type="evidence" value="ECO:0000266"/>
    <property type="project" value="RGD"/>
</dbReference>
<dbReference type="GO" id="GO:0021937">
    <property type="term" value="P:cerebellar Purkinje cell-granule cell precursor cell signaling"/>
    <property type="evidence" value="ECO:0000266"/>
    <property type="project" value="RGD"/>
</dbReference>
<dbReference type="GO" id="GO:0021549">
    <property type="term" value="P:cerebellum development"/>
    <property type="evidence" value="ECO:0000266"/>
    <property type="project" value="RGD"/>
</dbReference>
<dbReference type="GO" id="GO:0021879">
    <property type="term" value="P:forebrain neuron differentiation"/>
    <property type="evidence" value="ECO:0000266"/>
    <property type="project" value="RGD"/>
</dbReference>
<dbReference type="GO" id="GO:0021766">
    <property type="term" value="P:hippocampus development"/>
    <property type="evidence" value="ECO:0000266"/>
    <property type="project" value="RGD"/>
</dbReference>
<dbReference type="GO" id="GO:0007405">
    <property type="term" value="P:neuroblast proliferation"/>
    <property type="evidence" value="ECO:0000266"/>
    <property type="project" value="RGD"/>
</dbReference>
<dbReference type="GO" id="GO:0030182">
    <property type="term" value="P:neuron differentiation"/>
    <property type="evidence" value="ECO:0000318"/>
    <property type="project" value="GO_Central"/>
</dbReference>
<dbReference type="GO" id="GO:0045893">
    <property type="term" value="P:positive regulation of DNA-templated transcription"/>
    <property type="evidence" value="ECO:0000266"/>
    <property type="project" value="RGD"/>
</dbReference>
<dbReference type="GO" id="GO:1902692">
    <property type="term" value="P:regulation of neuroblast proliferation"/>
    <property type="evidence" value="ECO:0000266"/>
    <property type="project" value="RGD"/>
</dbReference>
<dbReference type="GO" id="GO:0006357">
    <property type="term" value="P:regulation of transcription by RNA polymerase II"/>
    <property type="evidence" value="ECO:0000318"/>
    <property type="project" value="GO_Central"/>
</dbReference>
<dbReference type="GO" id="GO:0021527">
    <property type="term" value="P:spinal cord association neuron differentiation"/>
    <property type="evidence" value="ECO:0000266"/>
    <property type="project" value="RGD"/>
</dbReference>
<dbReference type="CDD" id="cd00086">
    <property type="entry name" value="homeodomain"/>
    <property type="match status" value="1"/>
</dbReference>
<dbReference type="CDD" id="cd09367">
    <property type="entry name" value="LIM1_Lhx1_Lhx5"/>
    <property type="match status" value="1"/>
</dbReference>
<dbReference type="CDD" id="cd09375">
    <property type="entry name" value="LIM2_Lhx1_Lhx5"/>
    <property type="match status" value="1"/>
</dbReference>
<dbReference type="FunFam" id="2.10.110.10:FF:000120">
    <property type="entry name" value="Insulin gene enhancer protein ISL-2"/>
    <property type="match status" value="1"/>
</dbReference>
<dbReference type="FunFam" id="1.10.10.60:FF:000075">
    <property type="entry name" value="LIM/homeobox protein Lhx1"/>
    <property type="match status" value="1"/>
</dbReference>
<dbReference type="FunFam" id="2.10.110.10:FF:000046">
    <property type="entry name" value="LIM/homeobox protein Lhx1"/>
    <property type="match status" value="1"/>
</dbReference>
<dbReference type="Gene3D" id="2.10.110.10">
    <property type="entry name" value="Cysteine Rich Protein"/>
    <property type="match status" value="2"/>
</dbReference>
<dbReference type="Gene3D" id="1.10.10.60">
    <property type="entry name" value="Homeodomain-like"/>
    <property type="match status" value="1"/>
</dbReference>
<dbReference type="InterPro" id="IPR001356">
    <property type="entry name" value="HD"/>
</dbReference>
<dbReference type="InterPro" id="IPR017970">
    <property type="entry name" value="Homeobox_CS"/>
</dbReference>
<dbReference type="InterPro" id="IPR009057">
    <property type="entry name" value="Homeodomain-like_sf"/>
</dbReference>
<dbReference type="InterPro" id="IPR049618">
    <property type="entry name" value="Lhx1/5_LIM1"/>
</dbReference>
<dbReference type="InterPro" id="IPR049619">
    <property type="entry name" value="Lhx1/5_LIM2"/>
</dbReference>
<dbReference type="InterPro" id="IPR050453">
    <property type="entry name" value="LIM_Homeobox_TF"/>
</dbReference>
<dbReference type="InterPro" id="IPR001781">
    <property type="entry name" value="Znf_LIM"/>
</dbReference>
<dbReference type="PANTHER" id="PTHR24208">
    <property type="entry name" value="LIM/HOMEOBOX PROTEIN LHX"/>
    <property type="match status" value="1"/>
</dbReference>
<dbReference type="PANTHER" id="PTHR24208:SF115">
    <property type="entry name" value="LIM_HOMEOBOX PROTEIN LHX5"/>
    <property type="match status" value="1"/>
</dbReference>
<dbReference type="Pfam" id="PF00046">
    <property type="entry name" value="Homeodomain"/>
    <property type="match status" value="1"/>
</dbReference>
<dbReference type="Pfam" id="PF00412">
    <property type="entry name" value="LIM"/>
    <property type="match status" value="2"/>
</dbReference>
<dbReference type="SMART" id="SM00389">
    <property type="entry name" value="HOX"/>
    <property type="match status" value="1"/>
</dbReference>
<dbReference type="SMART" id="SM00132">
    <property type="entry name" value="LIM"/>
    <property type="match status" value="2"/>
</dbReference>
<dbReference type="SUPFAM" id="SSF57716">
    <property type="entry name" value="Glucocorticoid receptor-like (DNA-binding domain)"/>
    <property type="match status" value="2"/>
</dbReference>
<dbReference type="SUPFAM" id="SSF46689">
    <property type="entry name" value="Homeodomain-like"/>
    <property type="match status" value="1"/>
</dbReference>
<dbReference type="PROSITE" id="PS00027">
    <property type="entry name" value="HOMEOBOX_1"/>
    <property type="match status" value="1"/>
</dbReference>
<dbReference type="PROSITE" id="PS50071">
    <property type="entry name" value="HOMEOBOX_2"/>
    <property type="match status" value="1"/>
</dbReference>
<dbReference type="PROSITE" id="PS00478">
    <property type="entry name" value="LIM_DOMAIN_1"/>
    <property type="match status" value="2"/>
</dbReference>
<dbReference type="PROSITE" id="PS50023">
    <property type="entry name" value="LIM_DOMAIN_2"/>
    <property type="match status" value="2"/>
</dbReference>
<reference key="1">
    <citation type="journal article" date="1994" name="Cell">
        <title>Topographic organization of embryonic motor neurons defined by expression of LIM homeobox genes.</title>
        <authorList>
            <person name="Tsuchida T."/>
            <person name="Ensini M."/>
            <person name="Morton S.B."/>
            <person name="Baldassare M."/>
            <person name="Edlund T."/>
            <person name="Jessell T.M."/>
            <person name="Pfaff S.L."/>
        </authorList>
    </citation>
    <scope>NUCLEOTIDE SEQUENCE [MRNA]</scope>
    <source>
        <tissue>Brain</tissue>
    </source>
</reference>
<organism>
    <name type="scientific">Rattus norvegicus</name>
    <name type="common">Rat</name>
    <dbReference type="NCBI Taxonomy" id="10116"/>
    <lineage>
        <taxon>Eukaryota</taxon>
        <taxon>Metazoa</taxon>
        <taxon>Chordata</taxon>
        <taxon>Craniata</taxon>
        <taxon>Vertebrata</taxon>
        <taxon>Euteleostomi</taxon>
        <taxon>Mammalia</taxon>
        <taxon>Eutheria</taxon>
        <taxon>Euarchontoglires</taxon>
        <taxon>Glires</taxon>
        <taxon>Rodentia</taxon>
        <taxon>Myomorpha</taxon>
        <taxon>Muroidea</taxon>
        <taxon>Muridae</taxon>
        <taxon>Murinae</taxon>
        <taxon>Rattus</taxon>
    </lineage>
</organism>
<name>LHX5_RAT</name>
<keyword id="KW-0238">DNA-binding</keyword>
<keyword id="KW-0371">Homeobox</keyword>
<keyword id="KW-0440">LIM domain</keyword>
<keyword id="KW-0479">Metal-binding</keyword>
<keyword id="KW-0539">Nucleus</keyword>
<keyword id="KW-1185">Reference proteome</keyword>
<keyword id="KW-0677">Repeat</keyword>
<keyword id="KW-0804">Transcription</keyword>
<keyword id="KW-0805">Transcription regulation</keyword>
<keyword id="KW-0862">Zinc</keyword>